<proteinExistence type="evidence at protein level"/>
<dbReference type="EC" id="5.6.2.1" evidence="4"/>
<dbReference type="EMBL" id="AF053082">
    <property type="protein sequence ID" value="AAD15791.1"/>
    <property type="molecule type" value="mRNA"/>
</dbReference>
<dbReference type="EMBL" id="D87012">
    <property type="protein sequence ID" value="BAA20009.1"/>
    <property type="status" value="ALT_SEQ"/>
    <property type="molecule type" value="Genomic_DNA"/>
</dbReference>
<dbReference type="EMBL" id="AF017146">
    <property type="protein sequence ID" value="AAD01614.1"/>
    <property type="molecule type" value="mRNA"/>
</dbReference>
<dbReference type="EMBL" id="AF125216">
    <property type="protein sequence ID" value="AAD29670.1"/>
    <property type="molecule type" value="mRNA"/>
</dbReference>
<dbReference type="EMBL" id="CR456596">
    <property type="protein sequence ID" value="CAG30482.1"/>
    <property type="molecule type" value="mRNA"/>
</dbReference>
<dbReference type="EMBL" id="BC002432">
    <property type="protein sequence ID" value="AAH02432.1"/>
    <property type="molecule type" value="mRNA"/>
</dbReference>
<dbReference type="CCDS" id="CCDS13797.1">
    <molecule id="O95985-1"/>
</dbReference>
<dbReference type="RefSeq" id="NP_001269041.1">
    <molecule id="O95985-1"/>
    <property type="nucleotide sequence ID" value="NM_001282112.2"/>
</dbReference>
<dbReference type="RefSeq" id="NP_001269042.1">
    <molecule id="O95985-1"/>
    <property type="nucleotide sequence ID" value="NM_001282113.2"/>
</dbReference>
<dbReference type="RefSeq" id="NP_001336774.1">
    <molecule id="O95985-1"/>
    <property type="nucleotide sequence ID" value="NM_001349845.2"/>
</dbReference>
<dbReference type="RefSeq" id="NP_001336776.1">
    <molecule id="O95985-1"/>
    <property type="nucleotide sequence ID" value="NM_001349847.2"/>
</dbReference>
<dbReference type="RefSeq" id="NP_003926.1">
    <molecule id="O95985-1"/>
    <property type="nucleotide sequence ID" value="NM_003935.5"/>
</dbReference>
<dbReference type="RefSeq" id="XP_005261868.1">
    <property type="nucleotide sequence ID" value="XM_005261811.1"/>
</dbReference>
<dbReference type="RefSeq" id="XP_006724412.1">
    <property type="nucleotide sequence ID" value="XM_006724349.1"/>
</dbReference>
<dbReference type="RefSeq" id="XP_006724413.1">
    <property type="nucleotide sequence ID" value="XM_006724350.1"/>
</dbReference>
<dbReference type="RefSeq" id="XP_011528784.1">
    <property type="nucleotide sequence ID" value="XM_011530482.1"/>
</dbReference>
<dbReference type="PDB" id="5GVC">
    <property type="method" value="X-ray"/>
    <property type="resolution" value="2.44 A"/>
    <property type="chains" value="A/B=1-612"/>
</dbReference>
<dbReference type="PDB" id="5GVE">
    <property type="method" value="X-ray"/>
    <property type="resolution" value="3.61 A"/>
    <property type="chains" value="A=1-612"/>
</dbReference>
<dbReference type="PDB" id="9C9W">
    <property type="method" value="EM"/>
    <property type="resolution" value="4.25 A"/>
    <property type="chains" value="A/C=1-611"/>
</dbReference>
<dbReference type="PDB" id="9C9Y">
    <property type="method" value="EM"/>
    <property type="resolution" value="3.35 A"/>
    <property type="chains" value="A=1-611"/>
</dbReference>
<dbReference type="PDB" id="9CA0">
    <property type="method" value="EM"/>
    <property type="resolution" value="3.48 A"/>
    <property type="chains" value="A=1-611"/>
</dbReference>
<dbReference type="PDB" id="9CA1">
    <property type="method" value="EM"/>
    <property type="resolution" value="3.26 A"/>
    <property type="chains" value="A=1-611"/>
</dbReference>
<dbReference type="PDB" id="9CA4">
    <property type="method" value="EM"/>
    <property type="resolution" value="3.01 A"/>
    <property type="chains" value="A=1-611"/>
</dbReference>
<dbReference type="PDB" id="9CAG">
    <property type="method" value="EM"/>
    <property type="resolution" value="3.33 A"/>
    <property type="chains" value="A=1-611"/>
</dbReference>
<dbReference type="PDB" id="9CAH">
    <property type="method" value="EM"/>
    <property type="resolution" value="3.16 A"/>
    <property type="chains" value="A=1-717"/>
</dbReference>
<dbReference type="PDB" id="9CAJ">
    <property type="method" value="EM"/>
    <property type="resolution" value="3.51 A"/>
    <property type="chains" value="A=1-611"/>
</dbReference>
<dbReference type="PDB" id="9CAK">
    <property type="method" value="EM"/>
    <property type="resolution" value="3.01 A"/>
    <property type="chains" value="A=1-611"/>
</dbReference>
<dbReference type="PDB" id="9CAL">
    <property type="method" value="EM"/>
    <property type="resolution" value="3.15 A"/>
    <property type="chains" value="A=1-611"/>
</dbReference>
<dbReference type="PDBsum" id="5GVC"/>
<dbReference type="PDBsum" id="5GVE"/>
<dbReference type="PDBsum" id="9C9W"/>
<dbReference type="PDBsum" id="9C9Y"/>
<dbReference type="PDBsum" id="9CA0"/>
<dbReference type="PDBsum" id="9CA1"/>
<dbReference type="PDBsum" id="9CA4"/>
<dbReference type="PDBsum" id="9CAG"/>
<dbReference type="PDBsum" id="9CAH"/>
<dbReference type="PDBsum" id="9CAJ"/>
<dbReference type="PDBsum" id="9CAK"/>
<dbReference type="PDBsum" id="9CAL"/>
<dbReference type="EMDB" id="EMD-45374"/>
<dbReference type="EMDB" id="EMD-45376"/>
<dbReference type="EMDB" id="EMD-45378"/>
<dbReference type="EMDB" id="EMD-45379"/>
<dbReference type="EMDB" id="EMD-45380"/>
<dbReference type="EMDB" id="EMD-45390"/>
<dbReference type="EMDB" id="EMD-45391"/>
<dbReference type="EMDB" id="EMD-45393"/>
<dbReference type="EMDB" id="EMD-45394"/>
<dbReference type="EMDB" id="EMD-45395"/>
<dbReference type="SMR" id="O95985"/>
<dbReference type="BioGRID" id="114452">
    <property type="interactions" value="1481"/>
</dbReference>
<dbReference type="ComplexPortal" id="CPX-1621">
    <property type="entry name" value="TDRD3-TOP3B type IA topoisomerase complex"/>
</dbReference>
<dbReference type="CORUM" id="O95985"/>
<dbReference type="FunCoup" id="O95985">
    <property type="interactions" value="1537"/>
</dbReference>
<dbReference type="IntAct" id="O95985">
    <property type="interactions" value="85"/>
</dbReference>
<dbReference type="MINT" id="O95985"/>
<dbReference type="STRING" id="9606.ENSP00000381773"/>
<dbReference type="GlyGen" id="O95985">
    <property type="glycosylation" value="1 site, 1 O-linked glycan (1 site)"/>
</dbReference>
<dbReference type="iPTMnet" id="O95985"/>
<dbReference type="PhosphoSitePlus" id="O95985"/>
<dbReference type="BioMuta" id="TOP3B"/>
<dbReference type="jPOST" id="O95985"/>
<dbReference type="MassIVE" id="O95985"/>
<dbReference type="PaxDb" id="9606-ENSP00000381773"/>
<dbReference type="PeptideAtlas" id="O95985"/>
<dbReference type="ProteomicsDB" id="51161">
    <molecule id="O95985-1"/>
</dbReference>
<dbReference type="ProteomicsDB" id="51162">
    <molecule id="O95985-2"/>
</dbReference>
<dbReference type="ProteomicsDB" id="51163">
    <molecule id="O95985-3"/>
</dbReference>
<dbReference type="Pumba" id="O95985"/>
<dbReference type="Antibodypedia" id="3974">
    <property type="antibodies" value="209 antibodies from 29 providers"/>
</dbReference>
<dbReference type="DNASU" id="8940"/>
<dbReference type="Ensembl" id="ENST00000357179.10">
    <molecule id="O95985-1"/>
    <property type="protein sequence ID" value="ENSP00000349705.5"/>
    <property type="gene ID" value="ENSG00000100038.20"/>
</dbReference>
<dbReference type="Ensembl" id="ENST00000398793.6">
    <molecule id="O95985-1"/>
    <property type="protein sequence ID" value="ENSP00000381773.2"/>
    <property type="gene ID" value="ENSG00000100038.20"/>
</dbReference>
<dbReference type="GeneID" id="8940"/>
<dbReference type="KEGG" id="hsa:8940"/>
<dbReference type="MANE-Select" id="ENST00000357179.10">
    <property type="protein sequence ID" value="ENSP00000349705.5"/>
    <property type="RefSeq nucleotide sequence ID" value="NM_001282112.2"/>
    <property type="RefSeq protein sequence ID" value="NP_001269041.1"/>
</dbReference>
<dbReference type="UCSC" id="uc002zvs.5">
    <molecule id="O95985-1"/>
    <property type="organism name" value="human"/>
</dbReference>
<dbReference type="AGR" id="HGNC:11993"/>
<dbReference type="CTD" id="8940"/>
<dbReference type="DisGeNET" id="8940"/>
<dbReference type="GeneCards" id="TOP3B"/>
<dbReference type="HGNC" id="HGNC:11993">
    <property type="gene designation" value="TOP3B"/>
</dbReference>
<dbReference type="HPA" id="ENSG00000100038">
    <property type="expression patterns" value="Low tissue specificity"/>
</dbReference>
<dbReference type="MalaCards" id="TOP3B"/>
<dbReference type="MIM" id="603582">
    <property type="type" value="gene"/>
</dbReference>
<dbReference type="neXtProt" id="NX_O95985"/>
<dbReference type="OpenTargets" id="ENSG00000100038"/>
<dbReference type="PharmGKB" id="PA36674"/>
<dbReference type="VEuPathDB" id="HostDB:ENSG00000100038"/>
<dbReference type="eggNOG" id="KOG1957">
    <property type="taxonomic scope" value="Eukaryota"/>
</dbReference>
<dbReference type="GeneTree" id="ENSGT00940000156516"/>
<dbReference type="HOGENOM" id="CLU_002929_1_0_1"/>
<dbReference type="InParanoid" id="O95985"/>
<dbReference type="OMA" id="VIHNVYS"/>
<dbReference type="OrthoDB" id="430051at2759"/>
<dbReference type="PAN-GO" id="O95985">
    <property type="GO annotations" value="3 GO annotations based on evolutionary models"/>
</dbReference>
<dbReference type="PhylomeDB" id="O95985"/>
<dbReference type="TreeFam" id="TF105288"/>
<dbReference type="PathwayCommons" id="O95985"/>
<dbReference type="SignaLink" id="O95985"/>
<dbReference type="BioGRID-ORCS" id="8940">
    <property type="hits" value="23 hits in 1163 CRISPR screens"/>
</dbReference>
<dbReference type="CD-CODE" id="232F8A39">
    <property type="entry name" value="P-body"/>
</dbReference>
<dbReference type="CD-CODE" id="DEE660B4">
    <property type="entry name" value="Stress granule"/>
</dbReference>
<dbReference type="ChiTaRS" id="TOP3B">
    <property type="organism name" value="human"/>
</dbReference>
<dbReference type="GeneWiki" id="TOP3B"/>
<dbReference type="GenomeRNAi" id="8940"/>
<dbReference type="Pharos" id="O95985">
    <property type="development level" value="Tbio"/>
</dbReference>
<dbReference type="PRO" id="PR:O95985"/>
<dbReference type="Proteomes" id="UP000005640">
    <property type="component" value="Chromosome 22"/>
</dbReference>
<dbReference type="RNAct" id="O95985">
    <property type="molecule type" value="protein"/>
</dbReference>
<dbReference type="Bgee" id="ENSG00000100038">
    <property type="expression patterns" value="Expressed in paraflocculus and 108 other cell types or tissues"/>
</dbReference>
<dbReference type="ExpressionAtlas" id="O95985">
    <property type="expression patterns" value="baseline and differential"/>
</dbReference>
<dbReference type="GO" id="GO:0000793">
    <property type="term" value="C:condensed chromosome"/>
    <property type="evidence" value="ECO:0007669"/>
    <property type="project" value="Ensembl"/>
</dbReference>
<dbReference type="GO" id="GO:0140225">
    <property type="term" value="C:DNA topoisomerase III-beta-TDRD3 complex"/>
    <property type="evidence" value="ECO:0000353"/>
    <property type="project" value="ComplexPortal"/>
</dbReference>
<dbReference type="GO" id="GO:0005634">
    <property type="term" value="C:nucleus"/>
    <property type="evidence" value="ECO:0000314"/>
    <property type="project" value="ComplexPortal"/>
</dbReference>
<dbReference type="GO" id="GO:0003677">
    <property type="term" value="F:DNA binding"/>
    <property type="evidence" value="ECO:0000304"/>
    <property type="project" value="ProtInc"/>
</dbReference>
<dbReference type="GO" id="GO:0003916">
    <property type="term" value="F:DNA topoisomerase activity"/>
    <property type="evidence" value="ECO:0000304"/>
    <property type="project" value="ProtInc"/>
</dbReference>
<dbReference type="GO" id="GO:0003917">
    <property type="term" value="F:DNA topoisomerase type I (single strand cut, ATP-independent) activity"/>
    <property type="evidence" value="ECO:0000318"/>
    <property type="project" value="GO_Central"/>
</dbReference>
<dbReference type="GO" id="GO:0003723">
    <property type="term" value="F:RNA binding"/>
    <property type="evidence" value="ECO:0007005"/>
    <property type="project" value="UniProtKB"/>
</dbReference>
<dbReference type="GO" id="GO:0140226">
    <property type="term" value="F:RNA topoisomerase activity"/>
    <property type="evidence" value="ECO:0000314"/>
    <property type="project" value="FlyBase"/>
</dbReference>
<dbReference type="GO" id="GO:0007059">
    <property type="term" value="P:chromosome segregation"/>
    <property type="evidence" value="ECO:0007669"/>
    <property type="project" value="Ensembl"/>
</dbReference>
<dbReference type="GO" id="GO:0006310">
    <property type="term" value="P:DNA recombination"/>
    <property type="evidence" value="ECO:0000318"/>
    <property type="project" value="GO_Central"/>
</dbReference>
<dbReference type="GO" id="GO:0006281">
    <property type="term" value="P:DNA repair"/>
    <property type="evidence" value="ECO:0000318"/>
    <property type="project" value="GO_Central"/>
</dbReference>
<dbReference type="GO" id="GO:0006265">
    <property type="term" value="P:DNA topological change"/>
    <property type="evidence" value="ECO:0000318"/>
    <property type="project" value="GO_Central"/>
</dbReference>
<dbReference type="CDD" id="cd00186">
    <property type="entry name" value="TOP1Ac"/>
    <property type="match status" value="1"/>
</dbReference>
<dbReference type="CDD" id="cd03362">
    <property type="entry name" value="TOPRIM_TopoIA_TopoIII"/>
    <property type="match status" value="1"/>
</dbReference>
<dbReference type="FunFam" id="1.10.290.10:FF:000001">
    <property type="entry name" value="DNA topoisomerase"/>
    <property type="match status" value="1"/>
</dbReference>
<dbReference type="FunFam" id="1.10.460.10:FF:000032">
    <property type="entry name" value="DNA topoisomerase"/>
    <property type="match status" value="1"/>
</dbReference>
<dbReference type="FunFam" id="3.40.50.140:FF:000002">
    <property type="entry name" value="DNA topoisomerase"/>
    <property type="match status" value="1"/>
</dbReference>
<dbReference type="Gene3D" id="3.40.50.140">
    <property type="match status" value="1"/>
</dbReference>
<dbReference type="Gene3D" id="1.10.460.10">
    <property type="entry name" value="Topoisomerase I, domain 2"/>
    <property type="match status" value="1"/>
</dbReference>
<dbReference type="Gene3D" id="2.70.20.10">
    <property type="entry name" value="Topoisomerase I, domain 3"/>
    <property type="match status" value="1"/>
</dbReference>
<dbReference type="Gene3D" id="1.10.290.10">
    <property type="entry name" value="Topoisomerase I, domain 4"/>
    <property type="match status" value="1"/>
</dbReference>
<dbReference type="InterPro" id="IPR000380">
    <property type="entry name" value="Topo_IA"/>
</dbReference>
<dbReference type="InterPro" id="IPR003601">
    <property type="entry name" value="Topo_IA_2"/>
</dbReference>
<dbReference type="InterPro" id="IPR023406">
    <property type="entry name" value="Topo_IA_AS"/>
</dbReference>
<dbReference type="InterPro" id="IPR013497">
    <property type="entry name" value="Topo_IA_cen"/>
</dbReference>
<dbReference type="InterPro" id="IPR013824">
    <property type="entry name" value="Topo_IA_cen_sub1"/>
</dbReference>
<dbReference type="InterPro" id="IPR013825">
    <property type="entry name" value="Topo_IA_cen_sub2"/>
</dbReference>
<dbReference type="InterPro" id="IPR013826">
    <property type="entry name" value="Topo_IA_cen_sub3"/>
</dbReference>
<dbReference type="InterPro" id="IPR023405">
    <property type="entry name" value="Topo_IA_core_domain"/>
</dbReference>
<dbReference type="InterPro" id="IPR003602">
    <property type="entry name" value="Topo_IA_DNA-bd_dom"/>
</dbReference>
<dbReference type="InterPro" id="IPR006171">
    <property type="entry name" value="TOPRIM_dom"/>
</dbReference>
<dbReference type="InterPro" id="IPR034144">
    <property type="entry name" value="TOPRIM_TopoIII"/>
</dbReference>
<dbReference type="InterPro" id="IPR056452">
    <property type="entry name" value="Zn_ribbon_TOP3B"/>
</dbReference>
<dbReference type="PANTHER" id="PTHR11390:SF20">
    <property type="entry name" value="DNA TOPOISOMERASE 3-BETA-1"/>
    <property type="match status" value="1"/>
</dbReference>
<dbReference type="PANTHER" id="PTHR11390">
    <property type="entry name" value="PROKARYOTIC DNA TOPOISOMERASE"/>
    <property type="match status" value="1"/>
</dbReference>
<dbReference type="Pfam" id="PF01131">
    <property type="entry name" value="Topoisom_bac"/>
    <property type="match status" value="1"/>
</dbReference>
<dbReference type="Pfam" id="PF01751">
    <property type="entry name" value="Toprim"/>
    <property type="match status" value="1"/>
</dbReference>
<dbReference type="Pfam" id="PF23546">
    <property type="entry name" value="Zn_ribbon_TOP3B"/>
    <property type="match status" value="1"/>
</dbReference>
<dbReference type="PRINTS" id="PR00417">
    <property type="entry name" value="PRTPISMRASEI"/>
</dbReference>
<dbReference type="SMART" id="SM00437">
    <property type="entry name" value="TOP1Ac"/>
    <property type="match status" value="1"/>
</dbReference>
<dbReference type="SMART" id="SM00436">
    <property type="entry name" value="TOP1Bc"/>
    <property type="match status" value="1"/>
</dbReference>
<dbReference type="SMART" id="SM00493">
    <property type="entry name" value="TOPRIM"/>
    <property type="match status" value="1"/>
</dbReference>
<dbReference type="SUPFAM" id="SSF56712">
    <property type="entry name" value="Prokaryotic type I DNA topoisomerase"/>
    <property type="match status" value="1"/>
</dbReference>
<dbReference type="PROSITE" id="PS00396">
    <property type="entry name" value="TOPO_IA_1"/>
    <property type="match status" value="1"/>
</dbReference>
<dbReference type="PROSITE" id="PS52039">
    <property type="entry name" value="TOPO_IA_2"/>
    <property type="match status" value="1"/>
</dbReference>
<dbReference type="PROSITE" id="PS50880">
    <property type="entry name" value="TOPRIM"/>
    <property type="match status" value="1"/>
</dbReference>
<organism>
    <name type="scientific">Homo sapiens</name>
    <name type="common">Human</name>
    <dbReference type="NCBI Taxonomy" id="9606"/>
    <lineage>
        <taxon>Eukaryota</taxon>
        <taxon>Metazoa</taxon>
        <taxon>Chordata</taxon>
        <taxon>Craniata</taxon>
        <taxon>Vertebrata</taxon>
        <taxon>Euteleostomi</taxon>
        <taxon>Mammalia</taxon>
        <taxon>Eutheria</taxon>
        <taxon>Euarchontoglires</taxon>
        <taxon>Primates</taxon>
        <taxon>Haplorrhini</taxon>
        <taxon>Catarrhini</taxon>
        <taxon>Hominidae</taxon>
        <taxon>Homo</taxon>
    </lineage>
</organism>
<keyword id="KW-0002">3D-structure</keyword>
<keyword id="KW-0025">Alternative splicing</keyword>
<keyword id="KW-0238">DNA-binding</keyword>
<keyword id="KW-0413">Isomerase</keyword>
<keyword id="KW-1267">Proteomics identification</keyword>
<keyword id="KW-1185">Reference proteome</keyword>
<keyword id="KW-0799">Topoisomerase</keyword>
<reference key="1">
    <citation type="journal article" date="1999" name="Nucleic Acids Res.">
        <title>A new human topoisomerase III that interacts with SGS1 protein.</title>
        <authorList>
            <person name="Ng S.-W."/>
            <person name="Liu Y."/>
            <person name="Hasselblatt K.T."/>
            <person name="Mok S.C."/>
            <person name="Berkowitz R.S."/>
        </authorList>
    </citation>
    <scope>NUCLEOTIDE SEQUENCE [MRNA] (ISOFORM 1)</scope>
    <scope>ALTERNATIVE SPLICING</scope>
    <scope>TISSUE SPECIFICITY</scope>
</reference>
<reference key="2">
    <citation type="journal article" date="1997" name="Genome Res.">
        <title>One-megabase sequence analysis of the human immunoglobulin lambda gene locus.</title>
        <authorList>
            <person name="Kawasaki K."/>
            <person name="Minoshima S."/>
            <person name="Nakato E."/>
            <person name="Shibuya K."/>
            <person name="Shintani A."/>
            <person name="Schmeits J.L."/>
            <person name="Wang J."/>
            <person name="Shimizu N."/>
        </authorList>
    </citation>
    <scope>NUCLEOTIDE SEQUENCE [GENOMIC DNA]</scope>
</reference>
<reference key="3">
    <citation type="submission" date="1997-08" db="EMBL/GenBank/DDBJ databases">
        <authorList>
            <person name="Hanai R."/>
            <person name="Li W."/>
            <person name="Wang J.C."/>
        </authorList>
    </citation>
    <scope>NUCLEOTIDE SEQUENCE [MRNA] (ISOFORM 1)</scope>
</reference>
<reference key="4">
    <citation type="submission" date="1999-02" db="EMBL/GenBank/DDBJ databases">
        <authorList>
            <person name="Riou J.F."/>
            <person name="Goulaouic H."/>
            <person name="Grondard L."/>
        </authorList>
    </citation>
    <scope>NUCLEOTIDE SEQUENCE [MRNA] (ISOFORM 1)</scope>
</reference>
<reference key="5">
    <citation type="journal article" date="2004" name="Genome Biol.">
        <title>A genome annotation-driven approach to cloning the human ORFeome.</title>
        <authorList>
            <person name="Collins J.E."/>
            <person name="Wright C.L."/>
            <person name="Edwards C.A."/>
            <person name="Davis M.P."/>
            <person name="Grinham J.A."/>
            <person name="Cole C.G."/>
            <person name="Goward M.E."/>
            <person name="Aguado B."/>
            <person name="Mallya M."/>
            <person name="Mokrab Y."/>
            <person name="Huckle E.J."/>
            <person name="Beare D.M."/>
            <person name="Dunham I."/>
        </authorList>
    </citation>
    <scope>NUCLEOTIDE SEQUENCE [LARGE SCALE MRNA] (ISOFORM 1)</scope>
</reference>
<reference key="6">
    <citation type="journal article" date="2004" name="Genome Res.">
        <title>The status, quality, and expansion of the NIH full-length cDNA project: the Mammalian Gene Collection (MGC).</title>
        <authorList>
            <consortium name="The MGC Project Team"/>
        </authorList>
    </citation>
    <scope>NUCLEOTIDE SEQUENCE [LARGE SCALE MRNA] (ISOFORM 1)</scope>
    <scope>VARIANT ASN-365</scope>
    <source>
        <tissue>Skin</tissue>
    </source>
</reference>
<gene>
    <name type="primary">TOP3B</name>
    <name type="synonym">TOP3B1</name>
</gene>
<name>TOP3B_HUMAN</name>
<protein>
    <recommendedName>
        <fullName>DNA topoisomerase 3-beta-1</fullName>
        <ecNumber evidence="4">5.6.2.1</ecNumber>
    </recommendedName>
    <alternativeName>
        <fullName>DNA topoisomerase III beta-1</fullName>
    </alternativeName>
</protein>
<evidence type="ECO:0000250" key="1"/>
<evidence type="ECO:0000255" key="2">
    <source>
        <dbReference type="PROSITE-ProRule" id="PRU00995"/>
    </source>
</evidence>
<evidence type="ECO:0000255" key="3">
    <source>
        <dbReference type="PROSITE-ProRule" id="PRU01383"/>
    </source>
</evidence>
<evidence type="ECO:0000255" key="4">
    <source>
        <dbReference type="PROSITE-ProRule" id="PRU10131"/>
    </source>
</evidence>
<evidence type="ECO:0000256" key="5">
    <source>
        <dbReference type="SAM" id="MobiDB-lite"/>
    </source>
</evidence>
<evidence type="ECO:0000269" key="6">
    <source>
    </source>
</evidence>
<evidence type="ECO:0000269" key="7">
    <source>
    </source>
</evidence>
<evidence type="ECO:0000305" key="8"/>
<evidence type="ECO:0007829" key="9">
    <source>
        <dbReference type="PDB" id="5GVC"/>
    </source>
</evidence>
<evidence type="ECO:0007829" key="10">
    <source>
        <dbReference type="PDB" id="9C9Y"/>
    </source>
</evidence>
<evidence type="ECO:0007829" key="11">
    <source>
        <dbReference type="PDB" id="9CA1"/>
    </source>
</evidence>
<accession>O95985</accession>
<accession>A0M8Q3</accession>
<accession>Q9BUP5</accession>
<comment type="function">
    <text evidence="1">Releases the supercoiling and torsional tension of DNA introduced during the DNA replication and transcription by transiently cleaving and rejoining one strand of the DNA duplex. Introduces a single-strand break via transesterification at a target site in duplex DNA. The scissile phosphodiester is attacked by the catalytic tyrosine of the enzyme, resulting in the formation of a DNA-(5'-phosphotyrosyl)-enzyme intermediate and the expulsion of a 3'-OH DNA strand. The free DNA strand than undergoes passage around the unbroken strand thus removing DNA supercoils. Finally, in the religation step, the DNA 3'-OH attacks the covalent intermediate to expel the active-site tyrosine and restore the DNA phosphodiester backbone (By similarity). Possesses negatively supercoiled DNA relaxing activity.</text>
</comment>
<comment type="catalytic activity">
    <reaction evidence="4">
        <text>ATP-independent breakage of single-stranded DNA, followed by passage and rejoining.</text>
        <dbReference type="EC" id="5.6.2.1"/>
    </reaction>
</comment>
<comment type="interaction">
    <interactant intactId="EBI-373403">
        <id>O95985</id>
    </interactant>
    <interactant intactId="EBI-10173507">
        <id>Q6UY14-3</id>
        <label>ADAMTSL4</label>
    </interactant>
    <organismsDiffer>false</organismsDiffer>
    <experiments>3</experiments>
</comment>
<comment type="interaction">
    <interactant intactId="EBI-373403">
        <id>O95985</id>
    </interactant>
    <interactant intactId="EBI-4400025">
        <id>Q9Y2T1</id>
        <label>AXIN2</label>
    </interactant>
    <organismsDiffer>false</organismsDiffer>
    <experiments>3</experiments>
</comment>
<comment type="interaction">
    <interactant intactId="EBI-373403">
        <id>O95985</id>
    </interactant>
    <interactant intactId="EBI-725145">
        <id>O76071</id>
        <label>CIAO1</label>
    </interactant>
    <organismsDiffer>false</organismsDiffer>
    <experiments>4</experiments>
</comment>
<comment type="interaction">
    <interactant intactId="EBI-373403">
        <id>O95985</id>
    </interactant>
    <interactant intactId="EBI-1754067">
        <id>Q14296</id>
        <label>FASTK</label>
    </interactant>
    <organismsDiffer>false</organismsDiffer>
    <experiments>3</experiments>
</comment>
<comment type="interaction">
    <interactant intactId="EBI-373403">
        <id>O95985</id>
    </interactant>
    <interactant intactId="EBI-11519926">
        <id>Q6PI77</id>
        <label>GPRASP3</label>
    </interactant>
    <organismsDiffer>false</organismsDiffer>
    <experiments>3</experiments>
</comment>
<comment type="interaction">
    <interactant intactId="EBI-373403">
        <id>O95985</id>
    </interactant>
    <interactant intactId="EBI-2556193">
        <id>Q63ZY3</id>
        <label>KANK2</label>
    </interactant>
    <organismsDiffer>false</organismsDiffer>
    <experiments>3</experiments>
</comment>
<comment type="interaction">
    <interactant intactId="EBI-373403">
        <id>O95985</id>
    </interactant>
    <interactant intactId="EBI-10172526">
        <id>Q9UJV3-2</id>
        <label>MID2</label>
    </interactant>
    <organismsDiffer>false</organismsDiffer>
    <experiments>6</experiments>
</comment>
<comment type="interaction">
    <interactant intactId="EBI-373403">
        <id>O95985</id>
    </interactant>
    <interactant intactId="EBI-302355">
        <id>Q9UL42</id>
        <label>PNMA2</label>
    </interactant>
    <organismsDiffer>false</organismsDiffer>
    <experiments>3</experiments>
</comment>
<comment type="interaction">
    <interactant intactId="EBI-373403">
        <id>O95985</id>
    </interactant>
    <interactant intactId="EBI-7082156">
        <id>Q7Z698</id>
        <label>SPRED2</label>
    </interactant>
    <organismsDiffer>false</organismsDiffer>
    <experiments>4</experiments>
</comment>
<comment type="interaction">
    <interactant intactId="EBI-373403">
        <id>O95985</id>
    </interactant>
    <interactant intactId="EBI-2212028">
        <id>Q9Y2D8</id>
        <label>SSX2IP</label>
    </interactant>
    <organismsDiffer>false</organismsDiffer>
    <experiments>4</experiments>
</comment>
<comment type="interaction">
    <interactant intactId="EBI-373403">
        <id>O95985</id>
    </interactant>
    <interactant intactId="EBI-10969939">
        <id>Q9H7E2-3</id>
        <label>TDRD3</label>
    </interactant>
    <organismsDiffer>false</organismsDiffer>
    <experiments>4</experiments>
</comment>
<comment type="interaction">
    <interactant intactId="EBI-373403">
        <id>O95985</id>
    </interactant>
    <interactant intactId="EBI-725997">
        <id>Q8WV44</id>
        <label>TRIM41</label>
    </interactant>
    <organismsDiffer>false</organismsDiffer>
    <experiments>4</experiments>
</comment>
<comment type="interaction">
    <interactant intactId="EBI-373403">
        <id>O95985</id>
    </interactant>
    <interactant intactId="EBI-10177272">
        <id>P15622-3</id>
        <label>ZNF250</label>
    </interactant>
    <organismsDiffer>false</organismsDiffer>
    <experiments>3</experiments>
</comment>
<comment type="alternative products">
    <event type="alternative splicing"/>
    <isoform>
        <id>O95985-1</id>
        <name>1</name>
        <sequence type="displayed"/>
    </isoform>
    <isoform>
        <id>O95985-2</id>
        <name>2</name>
        <sequence type="described" ref="VSP_006525 VSP_006526"/>
    </isoform>
    <isoform>
        <id>O95985-3</id>
        <name>3</name>
        <sequence type="described" ref="VSP_006527 VSP_006528"/>
    </isoform>
</comment>
<comment type="tissue specificity">
    <text evidence="7">Isoform 1 is found in testis, heart and skeletal muscle. A 4 kb transcript which probably represents isoform 2 is found in thymus, kidney and pancreas.</text>
</comment>
<comment type="similarity">
    <text evidence="3 8">Belongs to the type IA topoisomerase family.</text>
</comment>
<comment type="sequence caution" evidence="8">
    <conflict type="erroneous gene model prediction">
        <sequence resource="EMBL-CDS" id="BAA20009"/>
    </conflict>
</comment>
<sequence>MKTVLMVAEKPSLAQSIAKILSRGSLSSHKGLNGACSVHEYTGTFAGQPVRFKMTSVCGHVMTLDFLGKYNKWDKVDPAELFSQAPTEKKEANPKLNMVKFLQVEGRGCDYIVLWLDCDKEGENICFEVLDAVLPVMNKAHGGEKTVFRARFSSITDTDICNAMACLGEPDHNEALSVDARQELDLRIGCAFTRFQTKYFQGKYGDLDSSLISFGPCQTPTLGFCVERHDKIQSFKPETYWVLQAKVNTDKDRSLLLDWDRVRVFDREIAQMFLNMTKLEKEAQVEATSRKEKAKQRPLALNTVEMLRVASSSLGMGPQHAMQTAERLYTQGYISYPRTETTHYPENFDLKGSLRQQANHPYWADTVKRLLAEGINRPRKGHDAGDHPPITPMKSATEAELGGDAWRLYEYITRHFIATVSHDCKYLQSTISFRIGPELFTCSGKTVLSPGFTEVMPWQSVPLEESLPTCQRGDAFPVGEVKMLEKQTNPPDYLTEAELITLMEKHGIGTDASIPVHINNICQRNYVTVESGRRLKPTNLGIVLVHGYYKIDAELVLPTIRSAVEKQLNLIAQGKADYRQVLGHTLDVFKRKFHYFVDSIAGMDELMEVSFSPLAATGKPLSRCGKCHRFMKYIQAKPSRLHCSHCDETYTLPQNGTIKLYKELRCPLDDFELVLWSSGSRGKSYPLCPYCYNHPPFRDMKKGMGCNECTHPSCQHSLSMLGIGQCVECESGVLVLDPTSGPKWKVACNKCNVVAHCFENAHRVRVSADTCSVCEAALLDVDFNKAKSPLPGDETQHMGCVFCDPVFQELVELKHAASCHPMHRGGPGRRQGRGRGRARRPPGKPNPRRPKDKMSALAAYFV</sequence>
<feature type="chain" id="PRO_0000145192" description="DNA topoisomerase 3-beta-1">
    <location>
        <begin position="1"/>
        <end position="862"/>
    </location>
</feature>
<feature type="domain" description="Toprim" evidence="2">
    <location>
        <begin position="3"/>
        <end position="153"/>
    </location>
</feature>
<feature type="domain" description="Topo IA-type catalytic" evidence="3">
    <location>
        <begin position="171"/>
        <end position="593"/>
    </location>
</feature>
<feature type="region of interest" description="Disordered" evidence="5">
    <location>
        <begin position="821"/>
        <end position="854"/>
    </location>
</feature>
<feature type="compositionally biased region" description="Basic residues" evidence="5">
    <location>
        <begin position="821"/>
        <end position="851"/>
    </location>
</feature>
<feature type="active site" description="O-(5'-phospho-DNA)-tyrosine intermediate" evidence="3">
    <location>
        <position position="336"/>
    </location>
</feature>
<feature type="splice variant" id="VSP_006525" description="In isoform 2." evidence="8">
    <original>GMGCNECTHPSCQHSLSMLGIGQCVECE</original>
    <variation>GECSHSLLSTGSCSLFSVPTPALHQAGL</variation>
    <location>
        <begin position="703"/>
        <end position="730"/>
    </location>
</feature>
<feature type="splice variant" id="VSP_006527" description="In isoform 3." evidence="8">
    <original>GMGCN</original>
    <variation>VVPCV</variation>
    <location>
        <begin position="703"/>
        <end position="707"/>
    </location>
</feature>
<feature type="splice variant" id="VSP_006528" description="In isoform 3." evidence="8">
    <location>
        <begin position="708"/>
        <end position="862"/>
    </location>
</feature>
<feature type="splice variant" id="VSP_006526" description="In isoform 2." evidence="8">
    <location>
        <begin position="731"/>
        <end position="862"/>
    </location>
</feature>
<feature type="sequence variant" id="VAR_052591" description="In dbSNP:rs9610728." evidence="6">
    <original>D</original>
    <variation>N</variation>
    <location>
        <position position="365"/>
    </location>
</feature>
<feature type="strand" evidence="9">
    <location>
        <begin position="3"/>
        <end position="10"/>
    </location>
</feature>
<feature type="helix" evidence="9">
    <location>
        <begin position="11"/>
        <end position="21"/>
    </location>
</feature>
<feature type="turn" evidence="9">
    <location>
        <begin position="22"/>
        <end position="24"/>
    </location>
</feature>
<feature type="strand" evidence="9">
    <location>
        <begin position="27"/>
        <end position="30"/>
    </location>
</feature>
<feature type="strand" evidence="10">
    <location>
        <begin position="32"/>
        <end position="35"/>
    </location>
</feature>
<feature type="strand" evidence="9">
    <location>
        <begin position="37"/>
        <end position="56"/>
    </location>
</feature>
<feature type="strand" evidence="9">
    <location>
        <begin position="61"/>
        <end position="66"/>
    </location>
</feature>
<feature type="turn" evidence="10">
    <location>
        <begin position="68"/>
        <end position="70"/>
    </location>
</feature>
<feature type="strand" evidence="11">
    <location>
        <begin position="71"/>
        <end position="76"/>
    </location>
</feature>
<feature type="helix" evidence="9">
    <location>
        <begin position="78"/>
        <end position="81"/>
    </location>
</feature>
<feature type="turn" evidence="9">
    <location>
        <begin position="82"/>
        <end position="84"/>
    </location>
</feature>
<feature type="strand" evidence="9">
    <location>
        <begin position="87"/>
        <end position="92"/>
    </location>
</feature>
<feature type="helix" evidence="9">
    <location>
        <begin position="94"/>
        <end position="96"/>
    </location>
</feature>
<feature type="helix" evidence="9">
    <location>
        <begin position="98"/>
        <end position="106"/>
    </location>
</feature>
<feature type="strand" evidence="9">
    <location>
        <begin position="110"/>
        <end position="115"/>
    </location>
</feature>
<feature type="helix" evidence="9">
    <location>
        <begin position="120"/>
        <end position="133"/>
    </location>
</feature>
<feature type="helix" evidence="9">
    <location>
        <begin position="134"/>
        <end position="136"/>
    </location>
</feature>
<feature type="turn" evidence="9">
    <location>
        <begin position="140"/>
        <end position="143"/>
    </location>
</feature>
<feature type="strand" evidence="9">
    <location>
        <begin position="147"/>
        <end position="149"/>
    </location>
</feature>
<feature type="strand" evidence="9">
    <location>
        <begin position="153"/>
        <end position="156"/>
    </location>
</feature>
<feature type="helix" evidence="9">
    <location>
        <begin position="157"/>
        <end position="165"/>
    </location>
</feature>
<feature type="helix" evidence="9">
    <location>
        <begin position="172"/>
        <end position="199"/>
    </location>
</feature>
<feature type="turn" evidence="9">
    <location>
        <begin position="200"/>
        <end position="203"/>
    </location>
</feature>
<feature type="helix" evidence="9">
    <location>
        <begin position="209"/>
        <end position="211"/>
    </location>
</feature>
<feature type="helix" evidence="9">
    <location>
        <begin position="218"/>
        <end position="233"/>
    </location>
</feature>
<feature type="strand" evidence="9">
    <location>
        <begin position="239"/>
        <end position="248"/>
    </location>
</feature>
<feature type="helix" evidence="11">
    <location>
        <begin position="249"/>
        <end position="251"/>
    </location>
</feature>
<feature type="strand" evidence="9">
    <location>
        <begin position="254"/>
        <end position="259"/>
    </location>
</feature>
<feature type="helix" evidence="9">
    <location>
        <begin position="267"/>
        <end position="275"/>
    </location>
</feature>
<feature type="turn" evidence="9">
    <location>
        <begin position="276"/>
        <end position="279"/>
    </location>
</feature>
<feature type="strand" evidence="9">
    <location>
        <begin position="282"/>
        <end position="295"/>
    </location>
</feature>
<feature type="helix" evidence="9">
    <location>
        <begin position="303"/>
        <end position="312"/>
    </location>
</feature>
<feature type="helix" evidence="9">
    <location>
        <begin position="318"/>
        <end position="330"/>
    </location>
</feature>
<feature type="strand" evidence="9">
    <location>
        <begin position="333"/>
        <end position="335"/>
    </location>
</feature>
<feature type="helix" evidence="9">
    <location>
        <begin position="350"/>
        <end position="355"/>
    </location>
</feature>
<feature type="turn" evidence="9">
    <location>
        <begin position="356"/>
        <end position="359"/>
    </location>
</feature>
<feature type="turn" evidence="9">
    <location>
        <begin position="361"/>
        <end position="363"/>
    </location>
</feature>
<feature type="helix" evidence="9">
    <location>
        <begin position="364"/>
        <end position="373"/>
    </location>
</feature>
<feature type="helix" evidence="9">
    <location>
        <begin position="398"/>
        <end position="401"/>
    </location>
</feature>
<feature type="helix" evidence="9">
    <location>
        <begin position="403"/>
        <end position="419"/>
    </location>
</feature>
<feature type="strand" evidence="9">
    <location>
        <begin position="424"/>
        <end position="435"/>
    </location>
</feature>
<feature type="strand" evidence="9">
    <location>
        <begin position="438"/>
        <end position="449"/>
    </location>
</feature>
<feature type="helix" evidence="9">
    <location>
        <begin position="451"/>
        <end position="454"/>
    </location>
</feature>
<feature type="helix" evidence="9">
    <location>
        <begin position="457"/>
        <end position="459"/>
    </location>
</feature>
<feature type="strand" evidence="9">
    <location>
        <begin position="475"/>
        <end position="487"/>
    </location>
</feature>
<feature type="helix" evidence="9">
    <location>
        <begin position="496"/>
        <end position="505"/>
    </location>
</feature>
<feature type="turn" evidence="9">
    <location>
        <begin position="510"/>
        <end position="513"/>
    </location>
</feature>
<feature type="helix" evidence="9">
    <location>
        <begin position="514"/>
        <end position="523"/>
    </location>
</feature>
<feature type="strand" evidence="9">
    <location>
        <begin position="526"/>
        <end position="530"/>
    </location>
</feature>
<feature type="turn" evidence="9">
    <location>
        <begin position="531"/>
        <end position="533"/>
    </location>
</feature>
<feature type="strand" evidence="9">
    <location>
        <begin position="534"/>
        <end position="537"/>
    </location>
</feature>
<feature type="helix" evidence="9">
    <location>
        <begin position="539"/>
        <end position="551"/>
    </location>
</feature>
<feature type="helix" evidence="9">
    <location>
        <begin position="553"/>
        <end position="555"/>
    </location>
</feature>
<feature type="helix" evidence="9">
    <location>
        <begin position="559"/>
        <end position="572"/>
    </location>
</feature>
<feature type="helix" evidence="9">
    <location>
        <begin position="578"/>
        <end position="598"/>
    </location>
</feature>
<feature type="helix" evidence="9">
    <location>
        <begin position="601"/>
        <end position="610"/>
    </location>
</feature>